<sequence length="96" mass="10864">MQLYTYLYLLVPLVTFHLILGTGTLDHGDALTERRSADATALKPEPVLLQKSSARSTDDNGKDTQMKRIFKKRRNKARGEEELSENAVEFARELAN</sequence>
<evidence type="ECO:0000250" key="1">
    <source>
        <dbReference type="UniProtKB" id="P07231"/>
    </source>
</evidence>
<evidence type="ECO:0000255" key="2"/>
<evidence type="ECO:0000256" key="3">
    <source>
        <dbReference type="SAM" id="MobiDB-lite"/>
    </source>
</evidence>
<evidence type="ECO:0000269" key="4">
    <source>
    </source>
</evidence>
<evidence type="ECO:0000303" key="5">
    <source>
    </source>
</evidence>
<evidence type="ECO:0000305" key="6"/>
<evidence type="ECO:0000305" key="7">
    <source>
    </source>
</evidence>
<name>CKR1C_CONRO</name>
<organism>
    <name type="scientific">Conus rolani</name>
    <name type="common">Cone snail</name>
    <dbReference type="NCBI Taxonomy" id="745791"/>
    <lineage>
        <taxon>Eukaryota</taxon>
        <taxon>Metazoa</taxon>
        <taxon>Spiralia</taxon>
        <taxon>Lophotrochozoa</taxon>
        <taxon>Mollusca</taxon>
        <taxon>Gastropoda</taxon>
        <taxon>Caenogastropoda</taxon>
        <taxon>Neogastropoda</taxon>
        <taxon>Conoidea</taxon>
        <taxon>Conidae</taxon>
        <taxon>Conus</taxon>
        <taxon>Asprella</taxon>
    </lineage>
</organism>
<feature type="signal peptide" evidence="2">
    <location>
        <begin position="1"/>
        <end position="21"/>
    </location>
</feature>
<feature type="propeptide" id="PRO_0000421896" evidence="7">
    <location>
        <begin position="22"/>
        <end position="78"/>
    </location>
</feature>
<feature type="peptide" id="PRO_0000421897" description="Conantokin Rl-C" evidence="7">
    <location>
        <begin position="79"/>
        <end position="96"/>
    </location>
</feature>
<feature type="region of interest" description="Disordered" evidence="3">
    <location>
        <begin position="36"/>
        <end position="85"/>
    </location>
</feature>
<feature type="compositionally biased region" description="Basic and acidic residues" evidence="3">
    <location>
        <begin position="56"/>
        <end position="66"/>
    </location>
</feature>
<feature type="binding site" description="via 4-carboxyglutamate" evidence="1">
    <location>
        <position position="81"/>
    </location>
    <ligand>
        <name>a divalent metal cation</name>
        <dbReference type="ChEBI" id="CHEBI:60240"/>
    </ligand>
</feature>
<feature type="binding site" description="via 4-carboxyglutamate" evidence="1">
    <location>
        <position position="85"/>
    </location>
    <ligand>
        <name>a divalent metal cation</name>
        <dbReference type="ChEBI" id="CHEBI:60240"/>
    </ligand>
</feature>
<feature type="binding site" description="via 4-carboxyglutamate" evidence="1">
    <location>
        <position position="89"/>
    </location>
    <ligand>
        <name>a divalent metal cation</name>
        <dbReference type="ChEBI" id="CHEBI:60240"/>
    </ligand>
</feature>
<feature type="binding site" description="via 4-carboxyglutamate" evidence="1">
    <location>
        <position position="93"/>
    </location>
    <ligand>
        <name>a divalent metal cation</name>
        <dbReference type="ChEBI" id="CHEBI:60240"/>
    </ligand>
</feature>
<feature type="modified residue" description="4-carboxyglutamate" evidence="1 7">
    <location>
        <position position="81"/>
    </location>
</feature>
<feature type="modified residue" description="4-carboxyglutamate" evidence="1 7">
    <location>
        <position position="82"/>
    </location>
</feature>
<feature type="modified residue" description="4-carboxyglutamate" evidence="1 7">
    <location>
        <position position="85"/>
    </location>
</feature>
<feature type="modified residue" description="4-carboxyglutamate" evidence="1 7">
    <location>
        <position position="89"/>
    </location>
</feature>
<feature type="modified residue" description="4-carboxyglutamate" evidence="1 7">
    <location>
        <position position="93"/>
    </location>
</feature>
<feature type="modified residue" description="Asparagine amide" evidence="1 7">
    <location>
        <position position="96"/>
    </location>
</feature>
<feature type="non-terminal residue">
    <location>
        <position position="96"/>
    </location>
</feature>
<comment type="function">
    <text evidence="4">Conantokins inhibit N-methyl-D-aspartate (NMDA) receptors. This toxin has antagonist activity on NR2B/GRIN2B (IC(50)=1.4 uM) and NR2A/GRIN2A (IC(50)=2.9 uM) subunits, when tested on rat receptors.</text>
</comment>
<comment type="cofactor">
    <cofactor evidence="1">
        <name>Ca(2+)</name>
        <dbReference type="ChEBI" id="CHEBI:29108"/>
    </cofactor>
    <cofactor evidence="1">
        <name>Mg(2+)</name>
        <dbReference type="ChEBI" id="CHEBI:18420"/>
    </cofactor>
    <text evidence="1">Divalent cations stabilize the toxin the in alpha-helix conformation.</text>
</comment>
<comment type="subcellular location">
    <subcellularLocation>
        <location evidence="7">Secreted</location>
    </subcellularLocation>
</comment>
<comment type="tissue specificity">
    <text evidence="7">Expressed by the venom duct.</text>
</comment>
<comment type="miscellaneous">
    <text evidence="6">The mature peptide does not contain cysteine residue.</text>
</comment>
<comment type="miscellaneous">
    <text evidence="7">Negative results: has no antagonist activity on NR2C/GRIN2C, and NR2D/GRIN2D subunits.</text>
</comment>
<comment type="similarity">
    <text evidence="6">Belongs to the conotoxin B superfamily.</text>
</comment>
<proteinExistence type="evidence at protein level"/>
<accession>P0DKZ1</accession>
<reference key="1">
    <citation type="journal article" date="2012" name="Biochemistry">
        <title>Conantokins derived from the Asprella clade impart conRl-B, an N-methyl d-aspartate receptor antagonist with a unique selectivity profile for NR2B subunits.</title>
        <authorList>
            <person name="Gowd K.H."/>
            <person name="Han T.S."/>
            <person name="Twede V."/>
            <person name="Gajewiak J."/>
            <person name="Smith M.D."/>
            <person name="Watkins M."/>
            <person name="Platt R.J."/>
            <person name="Toledo G."/>
            <person name="White H.S."/>
            <person name="Olivera B.M."/>
            <person name="Bulaj G."/>
        </authorList>
    </citation>
    <scope>NUCLEOTIDE SEQUENCE [GENOMIC DNA]</scope>
    <scope>SYNTHESIS OF 79-96</scope>
    <scope>FUNCTION</scope>
    <scope>GAMMA-CARBOXYGLUTAMATION AT GLU-81; GLU-82; GLU-85; GLU-89 AND GLU-93</scope>
    <scope>AMIDATION AT ASN-96</scope>
</reference>
<dbReference type="ConoServer" id="5850">
    <property type="toxin name" value="Conantokin-Rl3 precursor"/>
</dbReference>
<dbReference type="GO" id="GO:0005576">
    <property type="term" value="C:extracellular region"/>
    <property type="evidence" value="ECO:0007669"/>
    <property type="project" value="UniProtKB-SubCell"/>
</dbReference>
<dbReference type="GO" id="GO:0035792">
    <property type="term" value="C:host cell postsynaptic membrane"/>
    <property type="evidence" value="ECO:0007669"/>
    <property type="project" value="UniProtKB-KW"/>
</dbReference>
<dbReference type="GO" id="GO:0099106">
    <property type="term" value="F:ion channel regulator activity"/>
    <property type="evidence" value="ECO:0007669"/>
    <property type="project" value="UniProtKB-KW"/>
</dbReference>
<dbReference type="GO" id="GO:0046872">
    <property type="term" value="F:metal ion binding"/>
    <property type="evidence" value="ECO:0007669"/>
    <property type="project" value="UniProtKB-KW"/>
</dbReference>
<dbReference type="GO" id="GO:0090729">
    <property type="term" value="F:toxin activity"/>
    <property type="evidence" value="ECO:0007669"/>
    <property type="project" value="UniProtKB-KW"/>
</dbReference>
<dbReference type="InterPro" id="IPR005918">
    <property type="entry name" value="Conantokin_CS"/>
</dbReference>
<dbReference type="PROSITE" id="PS60025">
    <property type="entry name" value="CONANTOKIN"/>
    <property type="match status" value="1"/>
</dbReference>
<protein>
    <recommendedName>
        <fullName evidence="6">Conantokin Rl-C</fullName>
        <shortName evidence="6">Con Rl-C</shortName>
        <shortName evidence="5">ConRl-C</shortName>
    </recommendedName>
</protein>
<keyword id="KW-0027">Amidation</keyword>
<keyword id="KW-0106">Calcium</keyword>
<keyword id="KW-0301">Gamma-carboxyglutamic acid</keyword>
<keyword id="KW-0872">Ion channel impairing toxin</keyword>
<keyword id="KW-1028">Ionotropic glutamate receptor inhibitor</keyword>
<keyword id="KW-0460">Magnesium</keyword>
<keyword id="KW-0479">Metal-binding</keyword>
<keyword id="KW-0528">Neurotoxin</keyword>
<keyword id="KW-0629">Postsynaptic neurotoxin</keyword>
<keyword id="KW-0964">Secreted</keyword>
<keyword id="KW-0732">Signal</keyword>
<keyword id="KW-0800">Toxin</keyword>